<name>PAR2_MOUSE</name>
<dbReference type="EMBL" id="Z48043">
    <property type="protein sequence ID" value="CAA88097.1"/>
    <property type="molecule type" value="mRNA"/>
</dbReference>
<dbReference type="CCDS" id="CCDS26700.1"/>
<dbReference type="PIR" id="I48705">
    <property type="entry name" value="I48705"/>
</dbReference>
<dbReference type="RefSeq" id="NP_032000.3">
    <property type="nucleotide sequence ID" value="NM_007974.4"/>
</dbReference>
<dbReference type="SMR" id="P55086"/>
<dbReference type="FunCoup" id="P55086">
    <property type="interactions" value="759"/>
</dbReference>
<dbReference type="STRING" id="10090.ENSMUSP00000022185"/>
<dbReference type="ChEMBL" id="CHEMBL3734647"/>
<dbReference type="GlyCosmos" id="P55086">
    <property type="glycosylation" value="2 sites, No reported glycans"/>
</dbReference>
<dbReference type="GlyGen" id="P55086">
    <property type="glycosylation" value="2 sites"/>
</dbReference>
<dbReference type="iPTMnet" id="P55086"/>
<dbReference type="PhosphoSitePlus" id="P55086"/>
<dbReference type="PaxDb" id="10090-ENSMUSP00000022185"/>
<dbReference type="PeptideAtlas" id="P55086"/>
<dbReference type="ProteomicsDB" id="294012"/>
<dbReference type="Antibodypedia" id="4569">
    <property type="antibodies" value="348 antibodies from 37 providers"/>
</dbReference>
<dbReference type="DNASU" id="14063"/>
<dbReference type="Ensembl" id="ENSMUST00000022185.10">
    <property type="protein sequence ID" value="ENSMUSP00000022185.9"/>
    <property type="gene ID" value="ENSMUSG00000021678.10"/>
</dbReference>
<dbReference type="GeneID" id="14063"/>
<dbReference type="KEGG" id="mmu:14063"/>
<dbReference type="UCSC" id="uc011zda.2">
    <property type="organism name" value="mouse"/>
</dbReference>
<dbReference type="AGR" id="MGI:101910"/>
<dbReference type="CTD" id="2150"/>
<dbReference type="MGI" id="MGI:101910">
    <property type="gene designation" value="F2rl1"/>
</dbReference>
<dbReference type="VEuPathDB" id="HostDB:ENSMUSG00000021678"/>
<dbReference type="eggNOG" id="ENOG502QR8S">
    <property type="taxonomic scope" value="Eukaryota"/>
</dbReference>
<dbReference type="GeneTree" id="ENSGT01050000244840"/>
<dbReference type="HOGENOM" id="CLU_009579_8_2_1"/>
<dbReference type="InParanoid" id="P55086"/>
<dbReference type="OMA" id="SQSHVYA"/>
<dbReference type="OrthoDB" id="9370401at2759"/>
<dbReference type="PhylomeDB" id="P55086"/>
<dbReference type="TreeFam" id="TF330775"/>
<dbReference type="Reactome" id="R-MMU-375276">
    <property type="pathway name" value="Peptide ligand-binding receptors"/>
</dbReference>
<dbReference type="Reactome" id="R-MMU-416476">
    <property type="pathway name" value="G alpha (q) signalling events"/>
</dbReference>
<dbReference type="BioGRID-ORCS" id="14063">
    <property type="hits" value="2 hits in 77 CRISPR screens"/>
</dbReference>
<dbReference type="ChiTaRS" id="F2rl1">
    <property type="organism name" value="mouse"/>
</dbReference>
<dbReference type="PRO" id="PR:P55086"/>
<dbReference type="Proteomes" id="UP000000589">
    <property type="component" value="Chromosome 13"/>
</dbReference>
<dbReference type="RNAct" id="P55086">
    <property type="molecule type" value="protein"/>
</dbReference>
<dbReference type="Bgee" id="ENSMUSG00000021678">
    <property type="expression patterns" value="Expressed in epithelium of stomach and 121 other cell types or tissues"/>
</dbReference>
<dbReference type="ExpressionAtlas" id="P55086">
    <property type="expression patterns" value="baseline and differential"/>
</dbReference>
<dbReference type="GO" id="GO:0005769">
    <property type="term" value="C:early endosome"/>
    <property type="evidence" value="ECO:0007669"/>
    <property type="project" value="Ensembl"/>
</dbReference>
<dbReference type="GO" id="GO:0005886">
    <property type="term" value="C:plasma membrane"/>
    <property type="evidence" value="ECO:0007669"/>
    <property type="project" value="UniProtKB-SubCell"/>
</dbReference>
<dbReference type="GO" id="GO:0031143">
    <property type="term" value="C:pseudopodium"/>
    <property type="evidence" value="ECO:0000314"/>
    <property type="project" value="UniProtKB"/>
</dbReference>
<dbReference type="GO" id="GO:0004930">
    <property type="term" value="F:G protein-coupled receptor activity"/>
    <property type="evidence" value="ECO:0000315"/>
    <property type="project" value="UniProtKB"/>
</dbReference>
<dbReference type="GO" id="GO:0001965">
    <property type="term" value="F:G-protein alpha-subunit binding"/>
    <property type="evidence" value="ECO:0000314"/>
    <property type="project" value="UniProtKB"/>
</dbReference>
<dbReference type="GO" id="GO:0031681">
    <property type="term" value="F:G-protein beta-subunit binding"/>
    <property type="evidence" value="ECO:0000314"/>
    <property type="project" value="UniProtKB"/>
</dbReference>
<dbReference type="GO" id="GO:0032795">
    <property type="term" value="F:heterotrimeric G-protein binding"/>
    <property type="evidence" value="ECO:0000304"/>
    <property type="project" value="UniProtKB"/>
</dbReference>
<dbReference type="GO" id="GO:0002020">
    <property type="term" value="F:protease binding"/>
    <property type="evidence" value="ECO:0007669"/>
    <property type="project" value="Ensembl"/>
</dbReference>
<dbReference type="GO" id="GO:0001648">
    <property type="term" value="F:proteinase-activated receptor activity"/>
    <property type="evidence" value="ECO:0000315"/>
    <property type="project" value="MGI"/>
</dbReference>
<dbReference type="GO" id="GO:0015057">
    <property type="term" value="F:thrombin-activated receptor activity"/>
    <property type="evidence" value="ECO:0007669"/>
    <property type="project" value="InterPro"/>
</dbReference>
<dbReference type="GO" id="GO:0007596">
    <property type="term" value="P:blood coagulation"/>
    <property type="evidence" value="ECO:0007669"/>
    <property type="project" value="InterPro"/>
</dbReference>
<dbReference type="GO" id="GO:0045217">
    <property type="term" value="P:cell-cell junction maintenance"/>
    <property type="evidence" value="ECO:0007669"/>
    <property type="project" value="Ensembl"/>
</dbReference>
<dbReference type="GO" id="GO:0051607">
    <property type="term" value="P:defense response to virus"/>
    <property type="evidence" value="ECO:0000314"/>
    <property type="project" value="UniProtKB"/>
</dbReference>
<dbReference type="GO" id="GO:0061028">
    <property type="term" value="P:establishment of endothelial barrier"/>
    <property type="evidence" value="ECO:0007669"/>
    <property type="project" value="Ensembl"/>
</dbReference>
<dbReference type="GO" id="GO:0006954">
    <property type="term" value="P:inflammatory response"/>
    <property type="evidence" value="ECO:0007669"/>
    <property type="project" value="UniProtKB-KW"/>
</dbReference>
<dbReference type="GO" id="GO:0045087">
    <property type="term" value="P:innate immune response"/>
    <property type="evidence" value="ECO:0007669"/>
    <property type="project" value="UniProtKB-KW"/>
</dbReference>
<dbReference type="GO" id="GO:0050900">
    <property type="term" value="P:leukocyte migration"/>
    <property type="evidence" value="ECO:0000250"/>
    <property type="project" value="UniProtKB"/>
</dbReference>
<dbReference type="GO" id="GO:0070661">
    <property type="term" value="P:leukocyte proliferation"/>
    <property type="evidence" value="ECO:0000314"/>
    <property type="project" value="UniProtKB"/>
</dbReference>
<dbReference type="GO" id="GO:0097029">
    <property type="term" value="P:mature conventional dendritic cell differentiation"/>
    <property type="evidence" value="ECO:0000314"/>
    <property type="project" value="UniProtKB"/>
</dbReference>
<dbReference type="GO" id="GO:0032682">
    <property type="term" value="P:negative regulation of chemokine production"/>
    <property type="evidence" value="ECO:0007669"/>
    <property type="project" value="Ensembl"/>
</dbReference>
<dbReference type="GO" id="GO:0046676">
    <property type="term" value="P:negative regulation of insulin secretion"/>
    <property type="evidence" value="ECO:0000315"/>
    <property type="project" value="MGI"/>
</dbReference>
<dbReference type="GO" id="GO:0046329">
    <property type="term" value="P:negative regulation of JNK cascade"/>
    <property type="evidence" value="ECO:0007669"/>
    <property type="project" value="Ensembl"/>
</dbReference>
<dbReference type="GO" id="GO:0034140">
    <property type="term" value="P:negative regulation of toll-like receptor 3 signaling pathway"/>
    <property type="evidence" value="ECO:0007669"/>
    <property type="project" value="Ensembl"/>
</dbReference>
<dbReference type="GO" id="GO:0010804">
    <property type="term" value="P:negative regulation of tumor necrosis factor-mediated signaling pathway"/>
    <property type="evidence" value="ECO:0007669"/>
    <property type="project" value="Ensembl"/>
</dbReference>
<dbReference type="GO" id="GO:0042119">
    <property type="term" value="P:neutrophil activation"/>
    <property type="evidence" value="ECO:0000250"/>
    <property type="project" value="UniProtKB"/>
</dbReference>
<dbReference type="GO" id="GO:0030836">
    <property type="term" value="P:positive regulation of actin filament depolymerization"/>
    <property type="evidence" value="ECO:0007669"/>
    <property type="project" value="Ensembl"/>
</dbReference>
<dbReference type="GO" id="GO:0043123">
    <property type="term" value="P:positive regulation of canonical NF-kappaB signal transduction"/>
    <property type="evidence" value="ECO:0000250"/>
    <property type="project" value="UniProtKB"/>
</dbReference>
<dbReference type="GO" id="GO:0030335">
    <property type="term" value="P:positive regulation of cell migration"/>
    <property type="evidence" value="ECO:0000314"/>
    <property type="project" value="UniProtKB"/>
</dbReference>
<dbReference type="GO" id="GO:0032722">
    <property type="term" value="P:positive regulation of chemokine production"/>
    <property type="evidence" value="ECO:0000314"/>
    <property type="project" value="UniProtKB"/>
</dbReference>
<dbReference type="GO" id="GO:0050921">
    <property type="term" value="P:positive regulation of chemotaxis"/>
    <property type="evidence" value="ECO:0000314"/>
    <property type="project" value="UniProtKB"/>
</dbReference>
<dbReference type="GO" id="GO:0002720">
    <property type="term" value="P:positive regulation of cytokine production involved in immune response"/>
    <property type="evidence" value="ECO:0000250"/>
    <property type="project" value="UniProtKB"/>
</dbReference>
<dbReference type="GO" id="GO:0007204">
    <property type="term" value="P:positive regulation of cytosolic calcium ion concentration"/>
    <property type="evidence" value="ECO:0000314"/>
    <property type="project" value="UniProtKB"/>
</dbReference>
<dbReference type="GO" id="GO:0043311">
    <property type="term" value="P:positive regulation of eosinophil degranulation"/>
    <property type="evidence" value="ECO:0007669"/>
    <property type="project" value="Ensembl"/>
</dbReference>
<dbReference type="GO" id="GO:0070374">
    <property type="term" value="P:positive regulation of ERK1 and ERK2 cascade"/>
    <property type="evidence" value="ECO:0000314"/>
    <property type="project" value="UniProtKB"/>
</dbReference>
<dbReference type="GO" id="GO:0003104">
    <property type="term" value="P:positive regulation of glomerular filtration"/>
    <property type="evidence" value="ECO:0000250"/>
    <property type="project" value="UniProtKB"/>
</dbReference>
<dbReference type="GO" id="GO:0032731">
    <property type="term" value="P:positive regulation of interleukin-1 beta production"/>
    <property type="evidence" value="ECO:0000250"/>
    <property type="project" value="UniProtKB"/>
</dbReference>
<dbReference type="GO" id="GO:0032733">
    <property type="term" value="P:positive regulation of interleukin-10 production"/>
    <property type="evidence" value="ECO:0000250"/>
    <property type="project" value="UniProtKB"/>
</dbReference>
<dbReference type="GO" id="GO:0032755">
    <property type="term" value="P:positive regulation of interleukin-6 production"/>
    <property type="evidence" value="ECO:0000250"/>
    <property type="project" value="UniProtKB"/>
</dbReference>
<dbReference type="GO" id="GO:0032757">
    <property type="term" value="P:positive regulation of interleukin-8 production"/>
    <property type="evidence" value="ECO:0000250"/>
    <property type="project" value="UniProtKB"/>
</dbReference>
<dbReference type="GO" id="GO:0046330">
    <property type="term" value="P:positive regulation of JNK cascade"/>
    <property type="evidence" value="ECO:0007669"/>
    <property type="project" value="Ensembl"/>
</dbReference>
<dbReference type="GO" id="GO:0002690">
    <property type="term" value="P:positive regulation of leukocyte chemotaxis"/>
    <property type="evidence" value="ECO:0007669"/>
    <property type="project" value="Ensembl"/>
</dbReference>
<dbReference type="GO" id="GO:0070963">
    <property type="term" value="P:positive regulation of neutrophil mediated killing of gram-negative bacterium"/>
    <property type="evidence" value="ECO:0007669"/>
    <property type="project" value="Ensembl"/>
</dbReference>
<dbReference type="GO" id="GO:0060100">
    <property type="term" value="P:positive regulation of phagocytosis, engulfment"/>
    <property type="evidence" value="ECO:0007669"/>
    <property type="project" value="Ensembl"/>
</dbReference>
<dbReference type="GO" id="GO:0051897">
    <property type="term" value="P:positive regulation of phosphatidylinositol 3-kinase/protein kinase B signal transduction"/>
    <property type="evidence" value="ECO:0000314"/>
    <property type="project" value="UniProtKB"/>
</dbReference>
<dbReference type="GO" id="GO:0050927">
    <property type="term" value="P:positive regulation of positive chemotaxis"/>
    <property type="evidence" value="ECO:0007669"/>
    <property type="project" value="Ensembl"/>
</dbReference>
<dbReference type="GO" id="GO:0031274">
    <property type="term" value="P:positive regulation of pseudopodium assembly"/>
    <property type="evidence" value="ECO:0000314"/>
    <property type="project" value="UniProtKB"/>
</dbReference>
<dbReference type="GO" id="GO:1900135">
    <property type="term" value="P:positive regulation of renin secretion into blood stream"/>
    <property type="evidence" value="ECO:0000314"/>
    <property type="project" value="UniProtKB"/>
</dbReference>
<dbReference type="GO" id="GO:0035025">
    <property type="term" value="P:positive regulation of Rho protein signal transduction"/>
    <property type="evidence" value="ECO:0000314"/>
    <property type="project" value="UniProtKB"/>
</dbReference>
<dbReference type="GO" id="GO:0032930">
    <property type="term" value="P:positive regulation of superoxide anion generation"/>
    <property type="evidence" value="ECO:0000250"/>
    <property type="project" value="UniProtKB"/>
</dbReference>
<dbReference type="GO" id="GO:0034137">
    <property type="term" value="P:positive regulation of toll-like receptor 2 signaling pathway"/>
    <property type="evidence" value="ECO:0007669"/>
    <property type="project" value="Ensembl"/>
</dbReference>
<dbReference type="GO" id="GO:0034141">
    <property type="term" value="P:positive regulation of toll-like receptor 3 signaling pathway"/>
    <property type="evidence" value="ECO:0007669"/>
    <property type="project" value="Ensembl"/>
</dbReference>
<dbReference type="GO" id="GO:0034145">
    <property type="term" value="P:positive regulation of toll-like receptor 4 signaling pathway"/>
    <property type="evidence" value="ECO:0007669"/>
    <property type="project" value="Ensembl"/>
</dbReference>
<dbReference type="GO" id="GO:0045944">
    <property type="term" value="P:positive regulation of transcription by RNA polymerase II"/>
    <property type="evidence" value="ECO:0007669"/>
    <property type="project" value="Ensembl"/>
</dbReference>
<dbReference type="GO" id="GO:0032729">
    <property type="term" value="P:positive regulation of type II interferon production"/>
    <property type="evidence" value="ECO:0000314"/>
    <property type="project" value="UniProtKB"/>
</dbReference>
<dbReference type="GO" id="GO:0030193">
    <property type="term" value="P:regulation of blood coagulation"/>
    <property type="evidence" value="ECO:0007669"/>
    <property type="project" value="Ensembl"/>
</dbReference>
<dbReference type="GO" id="GO:0043122">
    <property type="term" value="P:regulation of canonical NF-kappaB signal transduction"/>
    <property type="evidence" value="ECO:0000250"/>
    <property type="project" value="UniProtKB"/>
</dbReference>
<dbReference type="GO" id="GO:2000341">
    <property type="term" value="P:regulation of chemokine (C-X-C motif) ligand 2 production"/>
    <property type="evidence" value="ECO:0000250"/>
    <property type="project" value="UniProtKB"/>
</dbReference>
<dbReference type="GO" id="GO:0046328">
    <property type="term" value="P:regulation of JNK cascade"/>
    <property type="evidence" value="ECO:0000250"/>
    <property type="project" value="UniProtKB"/>
</dbReference>
<dbReference type="GO" id="GO:0002286">
    <property type="term" value="P:T cell activation involved in immune response"/>
    <property type="evidence" value="ECO:0000314"/>
    <property type="project" value="UniProtKB"/>
</dbReference>
<dbReference type="GO" id="GO:0042311">
    <property type="term" value="P:vasodilation"/>
    <property type="evidence" value="ECO:0000314"/>
    <property type="project" value="GO_Central"/>
</dbReference>
<dbReference type="CDD" id="cd15370">
    <property type="entry name" value="7tmA_PAR2"/>
    <property type="match status" value="1"/>
</dbReference>
<dbReference type="FunFam" id="1.20.1070.10:FF:000040">
    <property type="entry name" value="Coagulation factor 2 (thrombin) receptor"/>
    <property type="match status" value="1"/>
</dbReference>
<dbReference type="Gene3D" id="1.20.1070.10">
    <property type="entry name" value="Rhodopsin 7-helix transmembrane proteins"/>
    <property type="match status" value="1"/>
</dbReference>
<dbReference type="InterPro" id="IPR000276">
    <property type="entry name" value="GPCR_Rhodpsn"/>
</dbReference>
<dbReference type="InterPro" id="IPR017452">
    <property type="entry name" value="GPCR_Rhodpsn_7TM"/>
</dbReference>
<dbReference type="InterPro" id="IPR002281">
    <property type="entry name" value="Pro_rcpt_2"/>
</dbReference>
<dbReference type="InterPro" id="IPR003912">
    <property type="entry name" value="Protea_act_rcpt"/>
</dbReference>
<dbReference type="PANTHER" id="PTHR24232">
    <property type="entry name" value="G-PROTEIN COUPLED RECEPTOR"/>
    <property type="match status" value="1"/>
</dbReference>
<dbReference type="PANTHER" id="PTHR24232:SF21">
    <property type="entry name" value="PROTEINASE-ACTIVATED RECEPTOR 2"/>
    <property type="match status" value="1"/>
</dbReference>
<dbReference type="Pfam" id="PF00001">
    <property type="entry name" value="7tm_1"/>
    <property type="match status" value="1"/>
</dbReference>
<dbReference type="PRINTS" id="PR00237">
    <property type="entry name" value="GPCRRHODOPSN"/>
</dbReference>
<dbReference type="PRINTS" id="PR01428">
    <property type="entry name" value="PROTEASEAR"/>
</dbReference>
<dbReference type="PRINTS" id="PR01152">
    <property type="entry name" value="PROTEASEAR2"/>
</dbReference>
<dbReference type="SUPFAM" id="SSF81321">
    <property type="entry name" value="Family A G protein-coupled receptor-like"/>
    <property type="match status" value="1"/>
</dbReference>
<dbReference type="PROSITE" id="PS50262">
    <property type="entry name" value="G_PROTEIN_RECEP_F1_2"/>
    <property type="match status" value="1"/>
</dbReference>
<reference key="1">
    <citation type="journal article" date="1995" name="J. Biol. Chem.">
        <title>The mouse proteinase-activated receptor-2 cDNA and gene. Molecular cloning and functional expression.</title>
        <authorList>
            <person name="Nystedt S."/>
            <person name="Larsson A.-K."/>
            <person name="Aaberg H."/>
            <person name="Sundelin J."/>
        </authorList>
    </citation>
    <scope>NUCLEOTIDE SEQUENCE [MRNA]</scope>
</reference>
<reference key="2">
    <citation type="journal article" date="1999" name="J. Pharmacol. Exp. Ther.">
        <title>Cardiovascular responses mediated by protease-activated receptor-2 (PAR-2) and thrombin receptor (PAR-1) are distinguished in mice deficient in PAR-2 or PAR-1.</title>
        <authorList>
            <person name="Damiano B.P."/>
            <person name="Cheung W.M."/>
            <person name="Santulli R.J."/>
            <person name="Fung-Leung W.P."/>
            <person name="Ngo K."/>
            <person name="Ye R.D."/>
            <person name="Darrow A.L."/>
            <person name="Derian C.K."/>
            <person name="de Garavilla L."/>
            <person name="Andrade-Gordon P."/>
        </authorList>
    </citation>
    <scope>FUNCTION IN CARDIOVASCULAR RESPONSES</scope>
</reference>
<reference key="3">
    <citation type="journal article" date="2000" name="J. Immunol.">
        <title>Delayed onset of inflammation in protease-activated receptor-2-deficient mice.</title>
        <authorList>
            <person name="Lindner J.R."/>
            <person name="Kahn M.L."/>
            <person name="Coughlin S.R."/>
            <person name="Sambrano G.R."/>
            <person name="Schauble E."/>
            <person name="Bernstein D."/>
            <person name="Foy D."/>
            <person name="Hafezi-Moghadam A."/>
            <person name="Ley K."/>
        </authorList>
    </citation>
    <scope>FUNCTION IN INFLAMMATORY RESPONSE</scope>
    <scope>DISRUPTION PHENOTYPE</scope>
</reference>
<reference key="4">
    <citation type="journal article" date="2002" name="Jpn. J. Pharmacol.">
        <title>Effect of protease-activated receptor-2 deficiency on allergic dermatitis in the mouse ear.</title>
        <authorList>
            <person name="Kawagoe J."/>
            <person name="Takizawa T."/>
            <person name="Matsumoto J."/>
            <person name="Tamiya M."/>
            <person name="Meek S.E."/>
            <person name="Smith A.J."/>
            <person name="Hunter G.D."/>
            <person name="Plevin R."/>
            <person name="Saito N."/>
            <person name="Kanke T."/>
            <person name="Fujii M."/>
            <person name="Wada Y."/>
        </authorList>
    </citation>
    <scope>DISRUPTION PHENOTYPE</scope>
</reference>
<reference key="5">
    <citation type="journal article" date="2003" name="FASEB J.">
        <title>Proinflammatory role of proteinase-activated receptor-2 in humans and mice during cutaneous inflammation in vivo.</title>
        <authorList>
            <person name="Seeliger S."/>
            <person name="Derian C.K."/>
            <person name="Vergnolle N."/>
            <person name="Bunnett N.W."/>
            <person name="Nawroth R."/>
            <person name="Schmelz M."/>
            <person name="Von Der Weid P.Y."/>
            <person name="Buddenkotte J."/>
            <person name="Sunderkotter C."/>
            <person name="Metze D."/>
            <person name="Andrade-Gordon P."/>
            <person name="Harms E."/>
            <person name="Vestweber D."/>
            <person name="Luger T.A."/>
            <person name="Steinhoff M."/>
        </authorList>
    </citation>
    <scope>DISRUPTION PHENOTYPE</scope>
</reference>
<reference key="6">
    <citation type="journal article" date="2003" name="J. Biol. Chem.">
        <title>A beta-arrestin-dependent scaffold is associated with prolonged MAPK activation in pseudopodia during protease-activated receptor-2-induced chemotaxis.</title>
        <authorList>
            <person name="Ge L."/>
            <person name="Ly Y."/>
            <person name="Hollenberg M."/>
            <person name="DeFea K."/>
        </authorList>
    </citation>
    <scope>FUNCTION IN CYTOSKELETAL REARRANGEMENT AND CHEMOTAXIS</scope>
</reference>
<reference key="7">
    <citation type="journal article" date="2005" name="J. Immunol.">
        <title>Protease-activated receptor-2 activation induces acute lung inflammation by neuropeptide-dependent mechanisms.</title>
        <authorList>
            <person name="Su X."/>
            <person name="Camerer E."/>
            <person name="Hamilton J.R."/>
            <person name="Coughlin S.R."/>
            <person name="Matthay M.A."/>
        </authorList>
    </citation>
    <scope>POSSIBLE INVOLVEMENT IN LUNG INFLAMMATION</scope>
</reference>
<reference key="8">
    <citation type="journal article" date="2005" name="J. Pharmacol. Sci.">
        <title>Abrogation of bronchial eosinophilic inflammation and attenuated eotaxin content in protease-activated receptor 2-deficient mice.</title>
        <authorList>
            <person name="Takizawa T."/>
            <person name="Tamiya M."/>
            <person name="Hara T."/>
            <person name="Matsumoto J."/>
            <person name="Saito N."/>
            <person name="Kanke T."/>
            <person name="Kawagoe J."/>
            <person name="Hattori Y."/>
        </authorList>
    </citation>
    <scope>DISRUPTION PHENOTYPE</scope>
</reference>
<reference key="9">
    <citation type="journal article" date="2005" name="Proc. Natl. Acad. Sci. U.S.A.">
        <title>A major role for proteolytic activity and proteinase-activated receptor-2 in the pathogenesis of infectious colitis.</title>
        <authorList>
            <person name="Hansen K.K."/>
            <person name="Sherman P.M."/>
            <person name="Cellars L."/>
            <person name="Andrade-Gordon P."/>
            <person name="Pan Z."/>
            <person name="Baruch A."/>
            <person name="Wallace J.L."/>
            <person name="Hollenberg M.D."/>
            <person name="Vergnolle N."/>
        </authorList>
    </citation>
    <scope>INVOLVEMENT IN INFECTIOUS COLITIS</scope>
    <scope>ACTIVATION BY GRANZYME A</scope>
    <scope>DISRUPTION PHENOTYPE</scope>
</reference>
<reference key="10">
    <citation type="journal article" date="2006" name="J. Exp. Med.">
        <title>Proteinase-activated receptor 2 modulates neuroinflammation in experimental autoimmune encephalomyelitis and multiple sclerosis.</title>
        <authorList>
            <person name="Noorbakhsh F."/>
            <person name="Tsutsui S."/>
            <person name="Vergnolle N."/>
            <person name="Boven L.A."/>
            <person name="Shariat N."/>
            <person name="Vodjgani M."/>
            <person name="Warren K.G."/>
            <person name="Andrade-Gordon P."/>
            <person name="Hollenberg M.D."/>
            <person name="Power C."/>
        </authorList>
    </citation>
    <scope>DISRUPTION PHENOTYPE</scope>
</reference>
<reference key="11">
    <citation type="journal article" date="2007" name="Nat. Immunol.">
        <title>'Role reversal' for the receptor PAR1 in sepsis-induced vascular damage.</title>
        <authorList>
            <person name="Kaneider N.C."/>
            <person name="Leger A.J."/>
            <person name="Agarwal A."/>
            <person name="Nguyen N."/>
            <person name="Perides G."/>
            <person name="Derian C."/>
            <person name="Covic L."/>
            <person name="Kuliopulos A."/>
        </authorList>
    </citation>
    <scope>TRANSACTIVATION BY F2R</scope>
</reference>
<reference evidence="17" key="12">
    <citation type="journal article" date="2008" name="Am. J. Pathol.">
        <title>Factor Xa stimulates proinflammatory and profibrotic responses in fibroblasts via protease-activated receptor-2 activation.</title>
        <authorList>
            <person name="Borensztajn K."/>
            <person name="Stiekema J."/>
            <person name="Nijmeijer S."/>
            <person name="Reitsma P.H."/>
            <person name="Peppelenbosch M.P."/>
            <person name="Spek C.A."/>
        </authorList>
    </citation>
    <scope>FUNCTION</scope>
</reference>
<reference key="13">
    <citation type="journal article" date="2010" name="Ann. Rheum. Dis.">
        <title>Protease-activated receptor 2: a novel pathogenic pathway in a murine model of osteoarthritis.</title>
        <authorList>
            <person name="Ferrell W.R."/>
            <person name="Kelso E.B."/>
            <person name="Lockhart J.C."/>
            <person name="Plevin R."/>
            <person name="McInnes I.B."/>
        </authorList>
    </citation>
    <scope>DISRUPTION PHENOTYPE</scope>
</reference>
<reference key="14">
    <citation type="journal article" date="2010" name="Immunology">
        <title>Protease-activated receptor 2 signalling promotes dendritic cell antigen transport and T-cell activation in vivo.</title>
        <authorList>
            <person name="Ramelli G."/>
            <person name="Fuertes S."/>
            <person name="Narayan S."/>
            <person name="Busso N."/>
            <person name="Acha-Orbea H."/>
            <person name="So A."/>
        </authorList>
    </citation>
    <scope>FUNCTION</scope>
</reference>
<reference key="15">
    <citation type="journal article" date="2010" name="Mol. Pharmacol.">
        <title>PAR1 and PAR2 couple to overlapping and distinct sets of G proteins and linked signaling pathways to differentially regulate cell physiology.</title>
        <authorList>
            <person name="McCoy K.L."/>
            <person name="Traynelis S.F."/>
            <person name="Hepler J.R."/>
        </authorList>
    </citation>
    <scope>FUNCTION</scope>
    <scope>INTERACTION WITH GNAQ; GNA11; GNA12; GNA13 AND GNA14</scope>
</reference>
<keyword id="KW-1003">Cell membrane</keyword>
<keyword id="KW-1015">Disulfide bond</keyword>
<keyword id="KW-0297">G-protein coupled receptor</keyword>
<keyword id="KW-0325">Glycoprotein</keyword>
<keyword id="KW-0391">Immunity</keyword>
<keyword id="KW-0395">Inflammatory response</keyword>
<keyword id="KW-0399">Innate immunity</keyword>
<keyword id="KW-0449">Lipoprotein</keyword>
<keyword id="KW-0472">Membrane</keyword>
<keyword id="KW-0564">Palmitate</keyword>
<keyword id="KW-0597">Phosphoprotein</keyword>
<keyword id="KW-0675">Receptor</keyword>
<keyword id="KW-1185">Reference proteome</keyword>
<keyword id="KW-0732">Signal</keyword>
<keyword id="KW-0807">Transducer</keyword>
<keyword id="KW-0812">Transmembrane</keyword>
<keyword id="KW-1133">Transmembrane helix</keyword>
<keyword id="KW-0832">Ubl conjugation</keyword>
<proteinExistence type="evidence at protein level"/>
<accession>P55086</accession>
<comment type="function">
    <text evidence="2 5 7 12 13 14 16">Receptor for trypsin and trypsin-like enzymes coupled to G proteins. Its function is mediated through the activation of several signaling pathways including phospholipase C (PLC), intracellular calcium, mitogen-activated protein kinase (MAPK), I-kappaB kinase/NF-kappaB and Rho. Can also be transactivated by cleaved F2r/Par1. Involved in modulation of inflammatory responses and regulation of innate and adaptive immunity, and acts as a sensor for proteolytic enzymes generated during infection. Generally is promoting inflammation. Can signal synergistically with Tlr4 and probably Tlr2 in inflammatory responses and modulates Tlr3 signaling. Has a protective role in establishing the endothelial barrier; the activity involves coagulation factor X. Regulates endothelial cell barrier integrity during neutrophil extravasation, probably following proteolytic cleavage by PRTN3 (By similarity). Proposed to have a bronchoprotective role in airway epithelium, but also shown to compromise the airway epithelial barrier by interrupting E-cadherin adhesion. Involved in the regulation of vascular tone; activation results in hypotension presumably mediated by vasodilation. Associates with a subset of G proteins alpha subunits such as GNAQ, GNA11, GNA14, GNA12 and GNA13, but probably not with G(o)-alpha, G(i) subunit alpha-1 and G(i) subunit alpha-2. Believed to be a class B receptor which internalizes as a complex with arrestin and traffic with it to endosomal vesicles, presumably as desensitized receptor, for extended periods of time. Mediates inhibition of TNF-alpha stimulated JNK phosphorylation via coupling to GNAQ and GNA11; the function involves dissociation of Ripk1 and Tradd from Tnfr1. Mediates phosphorylation of nuclear factor NF-kappa-B RELA subunit at 'Ser-536'; the function involves Ikbkb and is predominantly independent of G proteins. Involved in cellular migration. Involved in cytoskeletal rearrangement and chemotaxis through beta-arrestin-promoted scaffolds; the function is independent of GNAQ and GNA11 and involves promotion of cofilin dephosphorylation and actin filament severing. Induces redistribution of Cops5 from the plasma membrane to the cytosol and activation of the JNK cascade is mediated by Cops5. Involved in the recruitment of leukocytes to the sites of inflammation and is the major PAR receptor capable of modulating eosinophil function such as pro-inflammatory cytokine secretion, superoxide production and degranulation. During inflammation promotes dendritic cell maturation, trafficking to the lymph nodes and subsequent T-cell activation. Involved in antimicrobial response of innate immune cells; activation enhances phagocytosis of Gram-positive and killing of Gram-negative bacteria. Acts synergistically with interferon-gamma in enhancing antiviral responses (By similarity). Mediates activation of pro-inflammatory and pro-fibrotic responses in fibroblasts, triggered by coagulation factor Xa (F10) (PubMed:18202198). Probably mediates activation of barrier protective signaling responses in endothelial cells, triggered by coagulation factor Xa (F10) (By similarity).</text>
</comment>
<comment type="subunit">
    <text evidence="1 14">Interacts with TLR4, COPS5 and TMED2 (By similarity). Interacts with GNAQ, GNA11, GNA12, GNA13 and GNA14.</text>
</comment>
<comment type="subcellular location">
    <subcellularLocation>
        <location evidence="1">Cell membrane</location>
        <topology>Multi-pass membrane protein</topology>
    </subcellularLocation>
</comment>
<comment type="PTM">
    <text evidence="2">A proteolytic cleavage generates a new N-terminus that functions as a tethered ligand. Activating serine proteases include trypsin, mast cell tryptase, coagulation factors VII and Xa, myeloblastin/PRTN3 and membrane-type serine protease 1/ST14. Proposed subsequent cleavage by serine proteases is leading to receptor deactivation and include neutrophil elastase and cathepsin G. At least in part, implicated proteases are also shown to activate the receptor; the glycosylation status of the receptor is thought to contribute to the difference.</text>
</comment>
<comment type="PTM">
    <text evidence="2">N-glycosylated and sialylated.</text>
</comment>
<comment type="PTM">
    <text>Multiple phosphorylated on serine and threonine residues in the cytoplasmic region upon receptor activation; required for receptor desensitization and recruitment of beta-arrestin.</text>
</comment>
<comment type="PTM">
    <text evidence="1">Monoubiquitinated by Cbl at the plasma membrane and in early endosomes; not required for receptor endocytosis but for translocation to late endosomes or lysosomes. Deubiquitination involves Stambp and Usp8; required for lysosomal trafficking and receptor degradation (By similarity).</text>
</comment>
<comment type="disruption phenotype">
    <text evidence="5 6 8 9 10 11 15">Delayed onset of inflammation. Reduced progression of osteoarthritis, infectious colitis, allergic dermatitis and experimental autoimmune encephalomyelitis. Upon induced allergic and toxic contact dermatitis ear swelling responses, plasma extravasation and leuocyte adherence are significantly attenuated. Upon ovalbumin (OA) sensitization and following challenge infiltration of eosinophils and increase of eotaxin content in bronchoalveolar lavage fluid are abrogated.</text>
</comment>
<comment type="miscellaneous">
    <text evidence="1">Synthetic PAR agonist peptides (APs) that mimic the first six amino acids of the newly formed N-terminus activate the native, uncleaved receptor nonenzymatically by binding directly to the corresponding second extracellular loop to mediate signaling.</text>
</comment>
<comment type="similarity">
    <text evidence="4">Belongs to the G-protein coupled receptor 1 family.</text>
</comment>
<gene>
    <name type="primary">F2rl1</name>
    <name type="synonym">Gpcr11</name>
    <name type="synonym">Gpr11</name>
    <name type="synonym">Par2</name>
</gene>
<feature type="signal peptide" evidence="3">
    <location>
        <begin position="1"/>
        <end position="25"/>
    </location>
</feature>
<feature type="propeptide" id="PRO_0000012752" description="Removed for receptor activation" evidence="1">
    <location>
        <begin position="26"/>
        <end position="38"/>
    </location>
</feature>
<feature type="chain" id="PRO_0000012753" description="Proteinase-activated receptor 2">
    <location>
        <begin position="39"/>
        <end position="399"/>
    </location>
</feature>
<feature type="topological domain" description="Extracellular" evidence="2">
    <location>
        <begin position="39"/>
        <end position="73"/>
    </location>
</feature>
<feature type="transmembrane region" description="Helical; Name=1" evidence="2">
    <location>
        <begin position="74"/>
        <end position="103"/>
    </location>
</feature>
<feature type="topological domain" description="Cytoplasmic" evidence="2">
    <location>
        <begin position="104"/>
        <end position="110"/>
    </location>
</feature>
<feature type="transmembrane region" description="Helical; Name=2" evidence="2">
    <location>
        <begin position="111"/>
        <end position="139"/>
    </location>
</feature>
<feature type="topological domain" description="Extracellular" evidence="2">
    <location>
        <begin position="140"/>
        <end position="151"/>
    </location>
</feature>
<feature type="transmembrane region" description="Helical; Name=3" evidence="2">
    <location>
        <begin position="152"/>
        <end position="179"/>
    </location>
</feature>
<feature type="topological domain" description="Cytoplasmic" evidence="2">
    <location>
        <begin position="180"/>
        <end position="185"/>
    </location>
</feature>
<feature type="transmembrane region" description="Helical; Name=4" evidence="2">
    <location>
        <begin position="186"/>
        <end position="213"/>
    </location>
</feature>
<feature type="topological domain" description="Extracellular" evidence="2">
    <location>
        <begin position="214"/>
        <end position="237"/>
    </location>
</feature>
<feature type="transmembrane region" description="Helical; Name=5" evidence="2">
    <location>
        <begin position="238"/>
        <end position="271"/>
    </location>
</feature>
<feature type="topological domain" description="Cytoplasmic" evidence="2">
    <location>
        <begin position="272"/>
        <end position="279"/>
    </location>
</feature>
<feature type="transmembrane region" description="Helical; Name=6" evidence="2">
    <location>
        <begin position="280"/>
        <end position="319"/>
    </location>
</feature>
<feature type="topological domain" description="Extracellular" evidence="2">
    <location>
        <begin position="320"/>
        <end position="325"/>
    </location>
</feature>
<feature type="transmembrane region" description="Helical; Name=7" evidence="2">
    <location>
        <begin position="326"/>
        <end position="349"/>
    </location>
</feature>
<feature type="topological domain" description="Cytoplasmic" evidence="2">
    <location>
        <begin position="350"/>
        <end position="399"/>
    </location>
</feature>
<feature type="site" description="Cleavage; by trypsin" evidence="1">
    <location>
        <begin position="38"/>
        <end position="39"/>
    </location>
</feature>
<feature type="lipid moiety-binding region" description="S-palmitoyl cysteine" evidence="1">
    <location>
        <position position="363"/>
    </location>
</feature>
<feature type="glycosylation site" description="N-linked (GlcNAc...) asparagine" evidence="3">
    <location>
        <position position="33"/>
    </location>
</feature>
<feature type="glycosylation site" description="N-linked (GlcNAc...) asparagine" evidence="3">
    <location>
        <position position="224"/>
    </location>
</feature>
<feature type="disulfide bond" evidence="4">
    <location>
        <begin position="150"/>
        <end position="228"/>
    </location>
</feature>
<protein>
    <recommendedName>
        <fullName>Proteinase-activated receptor 2</fullName>
        <shortName>PAR-2</shortName>
    </recommendedName>
    <alternativeName>
        <fullName>Coagulation factor II receptor-like 1</fullName>
    </alternativeName>
    <alternativeName>
        <fullName>G-protein coupled receptor 11</fullName>
    </alternativeName>
    <alternativeName>
        <fullName>Thrombin receptor-like 1</fullName>
    </alternativeName>
</protein>
<organism>
    <name type="scientific">Mus musculus</name>
    <name type="common">Mouse</name>
    <dbReference type="NCBI Taxonomy" id="10090"/>
    <lineage>
        <taxon>Eukaryota</taxon>
        <taxon>Metazoa</taxon>
        <taxon>Chordata</taxon>
        <taxon>Craniata</taxon>
        <taxon>Vertebrata</taxon>
        <taxon>Euteleostomi</taxon>
        <taxon>Mammalia</taxon>
        <taxon>Eutheria</taxon>
        <taxon>Euarchontoglires</taxon>
        <taxon>Glires</taxon>
        <taxon>Rodentia</taxon>
        <taxon>Myomorpha</taxon>
        <taxon>Muroidea</taxon>
        <taxon>Muridae</taxon>
        <taxon>Murinae</taxon>
        <taxon>Mus</taxon>
        <taxon>Mus</taxon>
    </lineage>
</organism>
<sequence length="399" mass="44752">MRSLSLAWLLGGITLLAASVSCSRTENLAPGRNNSKGRSLIGRLETQPPITGKGVPVEPGFSIDEFSASILTGKLTTVFLPVVYIIVFVIGLPSNGMALWIFLFRTKKKHPAVIYMANLALADLLSVIWFPLKISYHLHGNNWVYGEALCKVLIGFFYGNMYCSILFMTCLSVQRYWVIVNPMGHPRKKANIAVGVSLAIWLLIFLVTIPLYVMKQTIYIPALNITTCHDVLPEEVLVGDMFNYFLSLAIGVFLFPALLTASAYVLMIKTLRSSAMDEHSEKKRQRAIRLIITVLAMYFICFAPSNLLLVVHYFLIKTQRQSHVYALYLVALCLSTLNSCIDPFVYYFVSKDFRDHARNALLCRSVRTVNRMQISLSSNKFSRKSGSYSSSSTSVKTSY</sequence>
<evidence type="ECO:0000250" key="1"/>
<evidence type="ECO:0000250" key="2">
    <source>
        <dbReference type="UniProtKB" id="P55085"/>
    </source>
</evidence>
<evidence type="ECO:0000255" key="3"/>
<evidence type="ECO:0000255" key="4">
    <source>
        <dbReference type="PROSITE-ProRule" id="PRU00521"/>
    </source>
</evidence>
<evidence type="ECO:0000269" key="5">
    <source>
    </source>
</evidence>
<evidence type="ECO:0000269" key="6">
    <source>
    </source>
</evidence>
<evidence type="ECO:0000269" key="7">
    <source>
    </source>
</evidence>
<evidence type="ECO:0000269" key="8">
    <source>
    </source>
</evidence>
<evidence type="ECO:0000269" key="9">
    <source>
    </source>
</evidence>
<evidence type="ECO:0000269" key="10">
    <source>
    </source>
</evidence>
<evidence type="ECO:0000269" key="11">
    <source>
    </source>
</evidence>
<evidence type="ECO:0000269" key="12">
    <source>
    </source>
</evidence>
<evidence type="ECO:0000269" key="13">
    <source>
    </source>
</evidence>
<evidence type="ECO:0000269" key="14">
    <source>
    </source>
</evidence>
<evidence type="ECO:0000269" key="15">
    <source>
    </source>
</evidence>
<evidence type="ECO:0000269" key="16">
    <source>
    </source>
</evidence>
<evidence type="ECO:0000305" key="17"/>